<proteinExistence type="inferred from homology"/>
<comment type="catalytic activity">
    <reaction evidence="1">
        <text>uridine + ATP = UMP + ADP + H(+)</text>
        <dbReference type="Rhea" id="RHEA:16825"/>
        <dbReference type="ChEBI" id="CHEBI:15378"/>
        <dbReference type="ChEBI" id="CHEBI:16704"/>
        <dbReference type="ChEBI" id="CHEBI:30616"/>
        <dbReference type="ChEBI" id="CHEBI:57865"/>
        <dbReference type="ChEBI" id="CHEBI:456216"/>
        <dbReference type="EC" id="2.7.1.48"/>
    </reaction>
</comment>
<comment type="catalytic activity">
    <reaction evidence="1">
        <text>cytidine + ATP = CMP + ADP + H(+)</text>
        <dbReference type="Rhea" id="RHEA:24674"/>
        <dbReference type="ChEBI" id="CHEBI:15378"/>
        <dbReference type="ChEBI" id="CHEBI:17562"/>
        <dbReference type="ChEBI" id="CHEBI:30616"/>
        <dbReference type="ChEBI" id="CHEBI:60377"/>
        <dbReference type="ChEBI" id="CHEBI:456216"/>
        <dbReference type="EC" id="2.7.1.48"/>
    </reaction>
</comment>
<comment type="pathway">
    <text evidence="1">Pyrimidine metabolism; CTP biosynthesis via salvage pathway; CTP from cytidine: step 1/3.</text>
</comment>
<comment type="pathway">
    <text evidence="1">Pyrimidine metabolism; UMP biosynthesis via salvage pathway; UMP from uridine: step 1/1.</text>
</comment>
<comment type="subcellular location">
    <subcellularLocation>
        <location evidence="1">Cytoplasm</location>
    </subcellularLocation>
</comment>
<comment type="similarity">
    <text evidence="1">Belongs to the uridine kinase family.</text>
</comment>
<name>URK_BORHD</name>
<organism>
    <name type="scientific">Borrelia hermsii (strain HS1 / DAH)</name>
    <dbReference type="NCBI Taxonomy" id="314723"/>
    <lineage>
        <taxon>Bacteria</taxon>
        <taxon>Pseudomonadati</taxon>
        <taxon>Spirochaetota</taxon>
        <taxon>Spirochaetia</taxon>
        <taxon>Spirochaetales</taxon>
        <taxon>Borreliaceae</taxon>
        <taxon>Borrelia</taxon>
    </lineage>
</organism>
<accession>B2S1K4</accession>
<keyword id="KW-0067">ATP-binding</keyword>
<keyword id="KW-0963">Cytoplasm</keyword>
<keyword id="KW-0418">Kinase</keyword>
<keyword id="KW-0547">Nucleotide-binding</keyword>
<keyword id="KW-0808">Transferase</keyword>
<feature type="chain" id="PRO_1000129071" description="Uridine kinase">
    <location>
        <begin position="1"/>
        <end position="206"/>
    </location>
</feature>
<feature type="binding site" evidence="1">
    <location>
        <begin position="9"/>
        <end position="16"/>
    </location>
    <ligand>
        <name>ATP</name>
        <dbReference type="ChEBI" id="CHEBI:30616"/>
    </ligand>
</feature>
<reference key="1">
    <citation type="submission" date="2004-12" db="EMBL/GenBank/DDBJ databases">
        <title>The genome sequence of Borrelia hermsii and Borrelia turicatae: comparative analysis of two agents of endemic N. America relapsing fever.</title>
        <authorList>
            <person name="Porcella S.F."/>
            <person name="Raffel S.J."/>
            <person name="Schrumpf M.E."/>
            <person name="Montgomery B."/>
            <person name="Smith T."/>
            <person name="Schwan T.G."/>
        </authorList>
    </citation>
    <scope>NUCLEOTIDE SEQUENCE [LARGE SCALE GENOMIC DNA]</scope>
    <source>
        <strain>HS1 / DAH</strain>
    </source>
</reference>
<dbReference type="EC" id="2.7.1.48" evidence="1"/>
<dbReference type="EMBL" id="CP000048">
    <property type="protein sequence ID" value="AAX16541.1"/>
    <property type="molecule type" value="Genomic_DNA"/>
</dbReference>
<dbReference type="RefSeq" id="WP_012421798.1">
    <property type="nucleotide sequence ID" value="NZ_CP073136.1"/>
</dbReference>
<dbReference type="SMR" id="B2S1K4"/>
<dbReference type="GeneID" id="71842827"/>
<dbReference type="KEGG" id="bhr:BH0015"/>
<dbReference type="HOGENOM" id="CLU_021278_1_2_12"/>
<dbReference type="UniPathway" id="UPA00574">
    <property type="reaction ID" value="UER00637"/>
</dbReference>
<dbReference type="UniPathway" id="UPA00579">
    <property type="reaction ID" value="UER00640"/>
</dbReference>
<dbReference type="Proteomes" id="UP000008834">
    <property type="component" value="Chromosome"/>
</dbReference>
<dbReference type="GO" id="GO:0005737">
    <property type="term" value="C:cytoplasm"/>
    <property type="evidence" value="ECO:0007669"/>
    <property type="project" value="UniProtKB-SubCell"/>
</dbReference>
<dbReference type="GO" id="GO:0005524">
    <property type="term" value="F:ATP binding"/>
    <property type="evidence" value="ECO:0007669"/>
    <property type="project" value="UniProtKB-UniRule"/>
</dbReference>
<dbReference type="GO" id="GO:0043771">
    <property type="term" value="F:cytidine kinase activity"/>
    <property type="evidence" value="ECO:0007669"/>
    <property type="project" value="RHEA"/>
</dbReference>
<dbReference type="GO" id="GO:0004849">
    <property type="term" value="F:uridine kinase activity"/>
    <property type="evidence" value="ECO:0007669"/>
    <property type="project" value="UniProtKB-UniRule"/>
</dbReference>
<dbReference type="GO" id="GO:0044211">
    <property type="term" value="P:CTP salvage"/>
    <property type="evidence" value="ECO:0007669"/>
    <property type="project" value="UniProtKB-UniRule"/>
</dbReference>
<dbReference type="GO" id="GO:0044206">
    <property type="term" value="P:UMP salvage"/>
    <property type="evidence" value="ECO:0007669"/>
    <property type="project" value="UniProtKB-UniRule"/>
</dbReference>
<dbReference type="CDD" id="cd02023">
    <property type="entry name" value="UMPK"/>
    <property type="match status" value="1"/>
</dbReference>
<dbReference type="Gene3D" id="3.40.50.300">
    <property type="entry name" value="P-loop containing nucleotide triphosphate hydrolases"/>
    <property type="match status" value="1"/>
</dbReference>
<dbReference type="HAMAP" id="MF_00551">
    <property type="entry name" value="Uridine_kinase"/>
    <property type="match status" value="1"/>
</dbReference>
<dbReference type="InterPro" id="IPR027417">
    <property type="entry name" value="P-loop_NTPase"/>
</dbReference>
<dbReference type="InterPro" id="IPR006083">
    <property type="entry name" value="PRK/URK"/>
</dbReference>
<dbReference type="InterPro" id="IPR026008">
    <property type="entry name" value="Uridine_kinase"/>
</dbReference>
<dbReference type="InterPro" id="IPR000764">
    <property type="entry name" value="Uridine_kinase-like"/>
</dbReference>
<dbReference type="NCBIfam" id="NF004018">
    <property type="entry name" value="PRK05480.1"/>
    <property type="match status" value="1"/>
</dbReference>
<dbReference type="NCBIfam" id="TIGR00235">
    <property type="entry name" value="udk"/>
    <property type="match status" value="1"/>
</dbReference>
<dbReference type="PANTHER" id="PTHR10285">
    <property type="entry name" value="URIDINE KINASE"/>
    <property type="match status" value="1"/>
</dbReference>
<dbReference type="Pfam" id="PF00485">
    <property type="entry name" value="PRK"/>
    <property type="match status" value="1"/>
</dbReference>
<dbReference type="PRINTS" id="PR00988">
    <property type="entry name" value="URIDINKINASE"/>
</dbReference>
<dbReference type="SUPFAM" id="SSF52540">
    <property type="entry name" value="P-loop containing nucleoside triphosphate hydrolases"/>
    <property type="match status" value="1"/>
</dbReference>
<gene>
    <name evidence="1" type="primary">udk</name>
    <name type="ordered locus">BH0015</name>
</gene>
<protein>
    <recommendedName>
        <fullName evidence="1">Uridine kinase</fullName>
        <ecNumber evidence="1">2.7.1.48</ecNumber>
    </recommendedName>
    <alternativeName>
        <fullName evidence="1">Cytidine monophosphokinase</fullName>
    </alternativeName>
    <alternativeName>
        <fullName evidence="1">Uridine monophosphokinase</fullName>
    </alternativeName>
</protein>
<evidence type="ECO:0000255" key="1">
    <source>
        <dbReference type="HAMAP-Rule" id="MF_00551"/>
    </source>
</evidence>
<sequence>MVKIIGIAGGSGSGKTTIVNKISEVIPEFVLISQDNYYKSVGDYEYEFLDVNFDHPDAFDNNLFYKQLKKIKENKLIHMPLYDFINHRRKDETVEIVPTPVVIVEGIMIFVEERVRNLIDLKIYIDTPNDIRFIRRLERDMSKRGRTLESVIEQYLSTTRAGYYRFIEPTKEYADLIIPEGGHNDKALYVLSSFLRTLGKEGADFF</sequence>